<gene>
    <name evidence="1" type="primary">mobA</name>
    <name type="ordered locus">USA300HOU_2251</name>
</gene>
<reference key="1">
    <citation type="journal article" date="2007" name="BMC Microbiol.">
        <title>Subtle genetic changes enhance virulence of methicillin resistant and sensitive Staphylococcus aureus.</title>
        <authorList>
            <person name="Highlander S.K."/>
            <person name="Hulten K.G."/>
            <person name="Qin X."/>
            <person name="Jiang H."/>
            <person name="Yerrapragada S."/>
            <person name="Mason E.O. Jr."/>
            <person name="Shang Y."/>
            <person name="Williams T.M."/>
            <person name="Fortunov R.M."/>
            <person name="Liu Y."/>
            <person name="Igboeli O."/>
            <person name="Petrosino J."/>
            <person name="Tirumalai M."/>
            <person name="Uzman A."/>
            <person name="Fox G.E."/>
            <person name="Cardenas A.M."/>
            <person name="Muzny D.M."/>
            <person name="Hemphill L."/>
            <person name="Ding Y."/>
            <person name="Dugan S."/>
            <person name="Blyth P.R."/>
            <person name="Buhay C.J."/>
            <person name="Dinh H.H."/>
            <person name="Hawes A.C."/>
            <person name="Holder M."/>
            <person name="Kovar C.L."/>
            <person name="Lee S.L."/>
            <person name="Liu W."/>
            <person name="Nazareth L.V."/>
            <person name="Wang Q."/>
            <person name="Zhou J."/>
            <person name="Kaplan S.L."/>
            <person name="Weinstock G.M."/>
        </authorList>
    </citation>
    <scope>NUCLEOTIDE SEQUENCE [LARGE SCALE GENOMIC DNA]</scope>
    <source>
        <strain>USA300 / TCH1516</strain>
    </source>
</reference>
<keyword id="KW-0963">Cytoplasm</keyword>
<keyword id="KW-0342">GTP-binding</keyword>
<keyword id="KW-0460">Magnesium</keyword>
<keyword id="KW-0479">Metal-binding</keyword>
<keyword id="KW-0501">Molybdenum cofactor biosynthesis</keyword>
<keyword id="KW-0547">Nucleotide-binding</keyword>
<keyword id="KW-0808">Transferase</keyword>
<sequence length="199" mass="22542">MKAIILAGGHSVRFGKPKAFAEVNGETFYSRVIKTLESTNMFNEIIISTNAQLATQFKYPNVVIDDENHNDKGPLAGIYTIMKQHPEEELFFVVSVDTPMITGKAVSTLYQFLVSHLIENHLDVAAFKEDGRFIPTIAFYSPNALGAITKALHSDNYSFKNVYHELSTDYLDVRDVDAPSYWYKNINYQHDLDALIQKL</sequence>
<name>MOBA_STAAT</name>
<proteinExistence type="inferred from homology"/>
<evidence type="ECO:0000255" key="1">
    <source>
        <dbReference type="HAMAP-Rule" id="MF_00316"/>
    </source>
</evidence>
<protein>
    <recommendedName>
        <fullName evidence="1">Probable molybdenum cofactor guanylyltransferase</fullName>
        <shortName evidence="1">MoCo guanylyltransferase</shortName>
        <ecNumber evidence="1">2.7.7.77</ecNumber>
    </recommendedName>
    <alternativeName>
        <fullName evidence="1">GTP:molybdopterin guanylyltransferase</fullName>
    </alternativeName>
    <alternativeName>
        <fullName evidence="1">Mo-MPT guanylyltransferase</fullName>
    </alternativeName>
    <alternativeName>
        <fullName evidence="1">Molybdopterin guanylyltransferase</fullName>
    </alternativeName>
    <alternativeName>
        <fullName evidence="1">Molybdopterin-guanine dinucleotide synthase</fullName>
        <shortName evidence="1">MGD synthase</shortName>
    </alternativeName>
</protein>
<comment type="function">
    <text evidence="1">Transfers a GMP moiety from GTP to Mo-molybdopterin (Mo-MPT) cofactor (Moco or molybdenum cofactor) to form Mo-molybdopterin guanine dinucleotide (Mo-MGD) cofactor.</text>
</comment>
<comment type="catalytic activity">
    <reaction evidence="1">
        <text>Mo-molybdopterin + GTP + H(+) = Mo-molybdopterin guanine dinucleotide + diphosphate</text>
        <dbReference type="Rhea" id="RHEA:34243"/>
        <dbReference type="ChEBI" id="CHEBI:15378"/>
        <dbReference type="ChEBI" id="CHEBI:33019"/>
        <dbReference type="ChEBI" id="CHEBI:37565"/>
        <dbReference type="ChEBI" id="CHEBI:71302"/>
        <dbReference type="ChEBI" id="CHEBI:71310"/>
        <dbReference type="EC" id="2.7.7.77"/>
    </reaction>
</comment>
<comment type="cofactor">
    <cofactor evidence="1">
        <name>Mg(2+)</name>
        <dbReference type="ChEBI" id="CHEBI:18420"/>
    </cofactor>
</comment>
<comment type="subcellular location">
    <subcellularLocation>
        <location evidence="1">Cytoplasm</location>
    </subcellularLocation>
</comment>
<comment type="domain">
    <text evidence="1">The N-terminal domain determines nucleotide recognition and specific binding, while the C-terminal domain determines the specific binding to the target protein.</text>
</comment>
<comment type="similarity">
    <text evidence="1">Belongs to the MobA family.</text>
</comment>
<feature type="chain" id="PRO_1000079118" description="Probable molybdenum cofactor guanylyltransferase">
    <location>
        <begin position="1"/>
        <end position="199"/>
    </location>
</feature>
<feature type="binding site" evidence="1">
    <location>
        <begin position="6"/>
        <end position="8"/>
    </location>
    <ligand>
        <name>GTP</name>
        <dbReference type="ChEBI" id="CHEBI:37565"/>
    </ligand>
</feature>
<feature type="binding site" evidence="1">
    <location>
        <position position="18"/>
    </location>
    <ligand>
        <name>GTP</name>
        <dbReference type="ChEBI" id="CHEBI:37565"/>
    </ligand>
</feature>
<feature type="binding site" evidence="1">
    <location>
        <position position="65"/>
    </location>
    <ligand>
        <name>GTP</name>
        <dbReference type="ChEBI" id="CHEBI:37565"/>
    </ligand>
</feature>
<feature type="binding site" evidence="1">
    <location>
        <position position="97"/>
    </location>
    <ligand>
        <name>GTP</name>
        <dbReference type="ChEBI" id="CHEBI:37565"/>
    </ligand>
</feature>
<feature type="binding site" evidence="1">
    <location>
        <position position="97"/>
    </location>
    <ligand>
        <name>Mg(2+)</name>
        <dbReference type="ChEBI" id="CHEBI:18420"/>
    </ligand>
</feature>
<dbReference type="EC" id="2.7.7.77" evidence="1"/>
<dbReference type="EMBL" id="CP000730">
    <property type="protein sequence ID" value="ABX30244.1"/>
    <property type="molecule type" value="Genomic_DNA"/>
</dbReference>
<dbReference type="RefSeq" id="WP_000643988.1">
    <property type="nucleotide sequence ID" value="NC_010079.1"/>
</dbReference>
<dbReference type="SMR" id="A8Z367"/>
<dbReference type="KEGG" id="sax:USA300HOU_2251"/>
<dbReference type="HOGENOM" id="CLU_055597_2_0_9"/>
<dbReference type="GO" id="GO:0005737">
    <property type="term" value="C:cytoplasm"/>
    <property type="evidence" value="ECO:0007669"/>
    <property type="project" value="UniProtKB-SubCell"/>
</dbReference>
<dbReference type="GO" id="GO:0005525">
    <property type="term" value="F:GTP binding"/>
    <property type="evidence" value="ECO:0007669"/>
    <property type="project" value="UniProtKB-UniRule"/>
</dbReference>
<dbReference type="GO" id="GO:0046872">
    <property type="term" value="F:metal ion binding"/>
    <property type="evidence" value="ECO:0007669"/>
    <property type="project" value="UniProtKB-KW"/>
</dbReference>
<dbReference type="GO" id="GO:0061603">
    <property type="term" value="F:molybdenum cofactor guanylyltransferase activity"/>
    <property type="evidence" value="ECO:0007669"/>
    <property type="project" value="UniProtKB-EC"/>
</dbReference>
<dbReference type="GO" id="GO:0006777">
    <property type="term" value="P:Mo-molybdopterin cofactor biosynthetic process"/>
    <property type="evidence" value="ECO:0007669"/>
    <property type="project" value="UniProtKB-KW"/>
</dbReference>
<dbReference type="CDD" id="cd02503">
    <property type="entry name" value="MobA"/>
    <property type="match status" value="1"/>
</dbReference>
<dbReference type="Gene3D" id="3.90.550.10">
    <property type="entry name" value="Spore Coat Polysaccharide Biosynthesis Protein SpsA, Chain A"/>
    <property type="match status" value="1"/>
</dbReference>
<dbReference type="HAMAP" id="MF_00316">
    <property type="entry name" value="MobA"/>
    <property type="match status" value="1"/>
</dbReference>
<dbReference type="InterPro" id="IPR025877">
    <property type="entry name" value="MobA-like_NTP_Trfase"/>
</dbReference>
<dbReference type="InterPro" id="IPR013482">
    <property type="entry name" value="Molybde_CF_guanTrfase"/>
</dbReference>
<dbReference type="InterPro" id="IPR029044">
    <property type="entry name" value="Nucleotide-diphossugar_trans"/>
</dbReference>
<dbReference type="NCBIfam" id="NF001457">
    <property type="entry name" value="PRK00317.1-3"/>
    <property type="match status" value="1"/>
</dbReference>
<dbReference type="PANTHER" id="PTHR19136">
    <property type="entry name" value="MOLYBDENUM COFACTOR GUANYLYLTRANSFERASE"/>
    <property type="match status" value="1"/>
</dbReference>
<dbReference type="PANTHER" id="PTHR19136:SF81">
    <property type="entry name" value="MOLYBDENUM COFACTOR GUANYLYLTRANSFERASE"/>
    <property type="match status" value="1"/>
</dbReference>
<dbReference type="Pfam" id="PF12804">
    <property type="entry name" value="NTP_transf_3"/>
    <property type="match status" value="1"/>
</dbReference>
<dbReference type="SUPFAM" id="SSF53448">
    <property type="entry name" value="Nucleotide-diphospho-sugar transferases"/>
    <property type="match status" value="1"/>
</dbReference>
<organism>
    <name type="scientific">Staphylococcus aureus (strain USA300 / TCH1516)</name>
    <dbReference type="NCBI Taxonomy" id="451516"/>
    <lineage>
        <taxon>Bacteria</taxon>
        <taxon>Bacillati</taxon>
        <taxon>Bacillota</taxon>
        <taxon>Bacilli</taxon>
        <taxon>Bacillales</taxon>
        <taxon>Staphylococcaceae</taxon>
        <taxon>Staphylococcus</taxon>
    </lineage>
</organism>
<accession>A8Z367</accession>